<gene>
    <name type="ordered locus">SACE_0591</name>
</gene>
<proteinExistence type="evidence at protein level"/>
<dbReference type="EC" id="1.-.-.-" evidence="1"/>
<dbReference type="EMBL" id="AM420293">
    <property type="protein sequence ID" value="CAL99936.1"/>
    <property type="molecule type" value="Genomic_DNA"/>
</dbReference>
<dbReference type="RefSeq" id="WP_009945174.1">
    <property type="nucleotide sequence ID" value="NC_009142.1"/>
</dbReference>
<dbReference type="PDB" id="7QBP">
    <property type="method" value="X-ray"/>
    <property type="resolution" value="1.38 A"/>
    <property type="chains" value="A=2-317"/>
</dbReference>
<dbReference type="PDBsum" id="7QBP"/>
<dbReference type="SMR" id="A4F7B2"/>
<dbReference type="STRING" id="405948.SACE_0591"/>
<dbReference type="KEGG" id="sen:SACE_0591"/>
<dbReference type="eggNOG" id="COG0208">
    <property type="taxonomic scope" value="Bacteria"/>
</dbReference>
<dbReference type="HOGENOM" id="CLU_072736_0_0_11"/>
<dbReference type="OrthoDB" id="5489780at2"/>
<dbReference type="Proteomes" id="UP000006728">
    <property type="component" value="Chromosome"/>
</dbReference>
<dbReference type="GO" id="GO:0046872">
    <property type="term" value="F:metal ion binding"/>
    <property type="evidence" value="ECO:0007669"/>
    <property type="project" value="UniProtKB-KW"/>
</dbReference>
<dbReference type="GO" id="GO:0016491">
    <property type="term" value="F:oxidoreductase activity"/>
    <property type="evidence" value="ECO:0007669"/>
    <property type="project" value="UniProtKB-KW"/>
</dbReference>
<dbReference type="GO" id="GO:0009263">
    <property type="term" value="P:deoxyribonucleotide biosynthetic process"/>
    <property type="evidence" value="ECO:0007669"/>
    <property type="project" value="InterPro"/>
</dbReference>
<dbReference type="CDD" id="cd07911">
    <property type="entry name" value="RNRR2_Rv0233_like"/>
    <property type="match status" value="1"/>
</dbReference>
<dbReference type="Gene3D" id="1.10.620.20">
    <property type="entry name" value="Ribonucleotide Reductase, subunit A"/>
    <property type="match status" value="1"/>
</dbReference>
<dbReference type="InterPro" id="IPR009078">
    <property type="entry name" value="Ferritin-like_SF"/>
</dbReference>
<dbReference type="InterPro" id="IPR033908">
    <property type="entry name" value="R2LOX"/>
</dbReference>
<dbReference type="InterPro" id="IPR012348">
    <property type="entry name" value="RNR-like"/>
</dbReference>
<dbReference type="InterPro" id="IPR000358">
    <property type="entry name" value="RNR_small_fam"/>
</dbReference>
<dbReference type="NCBIfam" id="NF006199">
    <property type="entry name" value="PRK08326.1-2"/>
    <property type="match status" value="1"/>
</dbReference>
<dbReference type="NCBIfam" id="NF006200">
    <property type="entry name" value="PRK08326.1-3"/>
    <property type="match status" value="1"/>
</dbReference>
<dbReference type="NCBIfam" id="NF006201">
    <property type="entry name" value="PRK08326.1-4"/>
    <property type="match status" value="1"/>
</dbReference>
<dbReference type="Pfam" id="PF00268">
    <property type="entry name" value="Ribonuc_red_sm"/>
    <property type="match status" value="1"/>
</dbReference>
<dbReference type="SUPFAM" id="SSF47240">
    <property type="entry name" value="Ferritin-like"/>
    <property type="match status" value="1"/>
</dbReference>
<reference key="1">
    <citation type="journal article" date="2007" name="Nat. Biotechnol.">
        <title>Complete genome sequence of the erythromycin-producing bacterium Saccharopolyspora erythraea NRRL23338.</title>
        <authorList>
            <person name="Oliynyk M."/>
            <person name="Samborskyy M."/>
            <person name="Lester J.B."/>
            <person name="Mironenko T."/>
            <person name="Scott N."/>
            <person name="Dickens S."/>
            <person name="Haydock S.F."/>
            <person name="Leadlay P.F."/>
        </authorList>
    </citation>
    <scope>NUCLEOTIDE SEQUENCE [LARGE SCALE GENOMIC DNA]</scope>
    <source>
        <strain>ATCC 11635 / DSM 40517 / JCM 4748 / NBRC 13426 / NCIMB 8594 / NRRL 2338</strain>
    </source>
</reference>
<feature type="chain" id="PRO_0000375436" description="R2-like ligand binding oxidase">
    <location>
        <begin position="1"/>
        <end position="317"/>
    </location>
</feature>
<feature type="binding site" evidence="1">
    <location>
        <position position="73"/>
    </location>
    <ligand>
        <name>Mn(2+)</name>
        <dbReference type="ChEBI" id="CHEBI:29035"/>
    </ligand>
</feature>
<feature type="binding site" evidence="1">
    <location>
        <position position="106"/>
    </location>
    <ligand>
        <name>Fe cation</name>
        <dbReference type="ChEBI" id="CHEBI:24875"/>
    </ligand>
</feature>
<feature type="binding site" evidence="1">
    <location>
        <position position="106"/>
    </location>
    <ligand>
        <name>Mn(2+)</name>
        <dbReference type="ChEBI" id="CHEBI:29035"/>
    </ligand>
</feature>
<feature type="binding site" evidence="1">
    <location>
        <position position="109"/>
    </location>
    <ligand>
        <name>Mn(2+)</name>
        <dbReference type="ChEBI" id="CHEBI:29035"/>
    </ligand>
</feature>
<feature type="binding site" evidence="1">
    <location>
        <position position="172"/>
    </location>
    <ligand>
        <name>Fe cation</name>
        <dbReference type="ChEBI" id="CHEBI:24875"/>
    </ligand>
</feature>
<feature type="binding site" evidence="1">
    <location>
        <position position="207"/>
    </location>
    <ligand>
        <name>Fe cation</name>
        <dbReference type="ChEBI" id="CHEBI:24875"/>
    </ligand>
</feature>
<feature type="binding site" evidence="1">
    <location>
        <position position="210"/>
    </location>
    <ligand>
        <name>Fe cation</name>
        <dbReference type="ChEBI" id="CHEBI:24875"/>
    </ligand>
</feature>
<feature type="cross-link" description="3-(O4'-tyrosyl)-valine (Val-Tyr)" evidence="1">
    <location>
        <begin position="76"/>
        <end position="167"/>
    </location>
</feature>
<feature type="helix" evidence="3">
    <location>
        <begin position="12"/>
        <end position="14"/>
    </location>
</feature>
<feature type="helix" evidence="3">
    <location>
        <begin position="24"/>
        <end position="34"/>
    </location>
</feature>
<feature type="helix" evidence="3">
    <location>
        <begin position="39"/>
        <end position="41"/>
    </location>
</feature>
<feature type="helix" evidence="3">
    <location>
        <begin position="45"/>
        <end position="53"/>
    </location>
</feature>
<feature type="helix" evidence="3">
    <location>
        <begin position="56"/>
        <end position="79"/>
    </location>
</feature>
<feature type="helix" evidence="3">
    <location>
        <begin position="81"/>
        <end position="90"/>
    </location>
</feature>
<feature type="helix" evidence="3">
    <location>
        <begin position="93"/>
        <end position="120"/>
    </location>
</feature>
<feature type="helix" evidence="3">
    <location>
        <begin position="128"/>
        <end position="131"/>
    </location>
</feature>
<feature type="helix" evidence="3">
    <location>
        <begin position="134"/>
        <end position="141"/>
    </location>
</feature>
<feature type="helix" evidence="3">
    <location>
        <begin position="143"/>
        <end position="149"/>
    </location>
</feature>
<feature type="turn" evidence="3">
    <location>
        <begin position="150"/>
        <end position="153"/>
    </location>
</feature>
<feature type="helix" evidence="3">
    <location>
        <begin position="157"/>
        <end position="167"/>
    </location>
</feature>
<feature type="helix" evidence="3">
    <location>
        <begin position="168"/>
        <end position="174"/>
    </location>
</feature>
<feature type="helix" evidence="3">
    <location>
        <begin position="175"/>
        <end position="188"/>
    </location>
</feature>
<feature type="turn" evidence="3">
    <location>
        <begin position="189"/>
        <end position="191"/>
    </location>
</feature>
<feature type="helix" evidence="3">
    <location>
        <begin position="194"/>
        <end position="224"/>
    </location>
</feature>
<feature type="helix" evidence="3">
    <location>
        <begin position="227"/>
        <end position="248"/>
    </location>
</feature>
<feature type="helix" evidence="3">
    <location>
        <begin position="259"/>
        <end position="261"/>
    </location>
</feature>
<feature type="helix" evidence="3">
    <location>
        <begin position="264"/>
        <end position="283"/>
    </location>
</feature>
<feature type="turn" evidence="3">
    <location>
        <begin position="284"/>
        <end position="287"/>
    </location>
</feature>
<feature type="helix" evidence="3">
    <location>
        <begin position="290"/>
        <end position="293"/>
    </location>
</feature>
<accession>A4F7B2</accession>
<sequence>MTSTATFREDFHSLRAGGLNWDSLPLRLFGKGNAKFWDPADIDFTRDAEDWQGLTEEERRSVAMLCSQFIAGEEAVTQDLQPFMAAMAAEGRFGDEMYLTQFCFEEAKHTQVFRLWMDAVGLTGDLHSHVAENPGYRAIFYEELPRSLNALHDDPSPANQVRASVTYNHVVEGTLALTGYFAWQKICRSRGILPGMQEVVRRIGDDERRHMAWGTFTCRRHVAADESNWDVVQEQMQHLLPLAVTQIQWRPEDAPEETPFRLDIDELAAYASDRAGRRLGAISAARGVPVEQIDVDASPEQLEDQFGVEDAAALEKA</sequence>
<protein>
    <recommendedName>
        <fullName evidence="1">R2-like ligand binding oxidase</fullName>
        <ecNumber evidence="1">1.-.-.-</ecNumber>
    </recommendedName>
    <alternativeName>
        <fullName>Ribonucleotide reductase R2 subunit homolog</fullName>
    </alternativeName>
    <alternativeName>
        <fullName>Ribonucleotide reductase small subunit homolog</fullName>
    </alternativeName>
</protein>
<organism>
    <name type="scientific">Saccharopolyspora erythraea (strain ATCC 11635 / DSM 40517 / JCM 4748 / NBRC 13426 / NCIMB 8594 / NRRL 2338)</name>
    <dbReference type="NCBI Taxonomy" id="405948"/>
    <lineage>
        <taxon>Bacteria</taxon>
        <taxon>Bacillati</taxon>
        <taxon>Actinomycetota</taxon>
        <taxon>Actinomycetes</taxon>
        <taxon>Pseudonocardiales</taxon>
        <taxon>Pseudonocardiaceae</taxon>
        <taxon>Saccharopolyspora</taxon>
    </lineage>
</organism>
<evidence type="ECO:0000250" key="1">
    <source>
        <dbReference type="UniProtKB" id="P9WH69"/>
    </source>
</evidence>
<evidence type="ECO:0000305" key="2"/>
<evidence type="ECO:0007829" key="3">
    <source>
        <dbReference type="PDB" id="7QBP"/>
    </source>
</evidence>
<keyword id="KW-0002">3D-structure</keyword>
<keyword id="KW-0408">Iron</keyword>
<keyword id="KW-0464">Manganese</keyword>
<keyword id="KW-0479">Metal-binding</keyword>
<keyword id="KW-0560">Oxidoreductase</keyword>
<keyword id="KW-1185">Reference proteome</keyword>
<name>RIR2H_SACEN</name>
<comment type="function">
    <text evidence="1">Probable oxidase.</text>
</comment>
<comment type="cofactor">
    <cofactor evidence="1">
        <name>Fe cation</name>
        <dbReference type="ChEBI" id="CHEBI:24875"/>
    </cofactor>
    <text evidence="1">Binds 1 Fe cation per subunit.</text>
</comment>
<comment type="cofactor">
    <cofactor evidence="1">
        <name>Mn(2+)</name>
        <dbReference type="ChEBI" id="CHEBI:29035"/>
    </cofactor>
    <text evidence="1">Binds 1 manganese ion per subunit. The iron and manganese ions form a dinuclear manganese-iron cluster.</text>
</comment>
<comment type="subunit">
    <text evidence="1">Homodimer.</text>
</comment>
<comment type="similarity">
    <text evidence="2">Belongs to the ribonucleoside diphosphate reductase small chain family. R2-like ligand binding oxidase subfamily.</text>
</comment>